<sequence>MADRKSDEGEDEYQHKEQMVTNRTSSFQPKSTEDSISKLAKMRAADRREEFMEERASFSAVKRGYQAGDDEEDDFTAEEEPPAKKPLTVAERLMAAMGHKAGEGLGKHGQGISEPIASSTQRGRTGLGHNAGKATARDFNEVWDETTEEKTVVERVEWMTDIEEEKRAEICEQLKDDKWMVIGKEKRTIDDETKFCSQQSITEMIEAKNVFDLMSDKDLREARTRANPYETIGSAFFQNRAAMKTANMDKIYDWILSRENTENDRFLLKNPLQESQTAENVDRSEDLFYFADVCAGPGGFSEYMLWRKGFYNAKGFGFTLAGKDDFKLFKFTASSQYFFETFYGTKDNGDVMDPVNIDSLEAHISRGTSGLGVHLMMADGGFSVEGQENIQEILSKRLYLCQLLVSLCIVREGGNFFCKLFDIFTPFSVGLIYLMRVCYQSVSLHKPHTSRPANSERYITCKGLRKEFANVVKEYLKRVNRKLDELKNKKSHDDVTDLMPLDVIEADQIFMDEIIRHNEFLANRQTLYLRKYQSFAKNQGQFDKDQGNLRDECLKYWQVPNKQRPRGGDRGNRHDNMQRLNPLQVYGKYCKKVCGESEIGNTFPDFSLNCLDAPLPNIPYEEYRFVPLASSGSPNLLIAAGDSAFIFRSGRFESISADHIRIPENTILLVDWAEEVVRGDGNRIKISSEPQVVRIIDAAVLFGDDVSNLPYEERMKAAEKFVAALKQTNRKVKKGWGHRAEMIKPHLKICAKTYSLAELDEFRSNLEKLEHNRELAVLFTEGEFTFRCQALRFTRIIKQEWRMGWSKSQQKPYAHSQEHQNAGSIPVELWAEKSIYSSFWDSVICLNKDKKKLMEAMEHTKGKCPIPSSIWSWKACIRTPYGPEKILNYPEPFEGKPTIAALKAQIENTDLIVKRVRN</sequence>
<protein>
    <recommendedName>
        <fullName>Cap-specific mRNA (nucleoside-2'-O-)-methyltransferase 1</fullName>
        <ecNumber>2.1.1.57</ecNumber>
    </recommendedName>
    <alternativeName>
        <fullName>Cap1 2'O-ribose methyltransferase 1</fullName>
        <shortName>MTr1</shortName>
    </alternativeName>
</protein>
<evidence type="ECO:0000250" key="1"/>
<evidence type="ECO:0000255" key="2">
    <source>
        <dbReference type="PROSITE-ProRule" id="PRU00092"/>
    </source>
</evidence>
<evidence type="ECO:0000255" key="3">
    <source>
        <dbReference type="PROSITE-ProRule" id="PRU00945"/>
    </source>
</evidence>
<evidence type="ECO:0000256" key="4">
    <source>
        <dbReference type="SAM" id="MobiDB-lite"/>
    </source>
</evidence>
<evidence type="ECO:0000305" key="5"/>
<evidence type="ECO:0000312" key="6">
    <source>
        <dbReference type="WormBase" id="Y53F4B.13a"/>
    </source>
</evidence>
<gene>
    <name evidence="6" type="primary">cmtr-1</name>
    <name evidence="6" type="ORF">Y53F4B.13</name>
</gene>
<proteinExistence type="inferred from homology"/>
<keyword id="KW-0025">Alternative splicing</keyword>
<keyword id="KW-0489">Methyltransferase</keyword>
<keyword id="KW-0506">mRNA capping</keyword>
<keyword id="KW-0507">mRNA processing</keyword>
<keyword id="KW-1185">Reference proteome</keyword>
<keyword id="KW-0949">S-adenosyl-L-methionine</keyword>
<keyword id="KW-0808">Transferase</keyword>
<feature type="chain" id="PRO_0000399800" description="Cap-specific mRNA (nucleoside-2'-O-)-methyltransferase 1">
    <location>
        <begin position="1"/>
        <end position="918"/>
    </location>
</feature>
<feature type="domain" description="G-patch" evidence="2">
    <location>
        <begin position="86"/>
        <end position="132"/>
    </location>
</feature>
<feature type="domain" description="RrmJ-type SAM-dependent 2'-O-MTase" evidence="3">
    <location>
        <begin position="236"/>
        <end position="465"/>
    </location>
</feature>
<feature type="region of interest" description="Disordered" evidence="4">
    <location>
        <begin position="1"/>
        <end position="56"/>
    </location>
</feature>
<feature type="region of interest" description="Disordered" evidence="4">
    <location>
        <begin position="62"/>
        <end position="81"/>
    </location>
</feature>
<feature type="compositionally biased region" description="Basic and acidic residues" evidence="4">
    <location>
        <begin position="1"/>
        <end position="18"/>
    </location>
</feature>
<feature type="compositionally biased region" description="Polar residues" evidence="4">
    <location>
        <begin position="19"/>
        <end position="30"/>
    </location>
</feature>
<feature type="compositionally biased region" description="Basic and acidic residues" evidence="4">
    <location>
        <begin position="43"/>
        <end position="56"/>
    </location>
</feature>
<feature type="compositionally biased region" description="Acidic residues" evidence="4">
    <location>
        <begin position="68"/>
        <end position="80"/>
    </location>
</feature>
<feature type="active site" description="Proton acceptor" evidence="3">
    <location>
        <position position="419"/>
    </location>
</feature>
<feature type="binding site" evidence="3">
    <location>
        <position position="298"/>
    </location>
    <ligand>
        <name>S-adenosyl-L-methionine</name>
        <dbReference type="ChEBI" id="CHEBI:59789"/>
    </ligand>
</feature>
<feature type="binding site" evidence="3">
    <location>
        <position position="379"/>
    </location>
    <ligand>
        <name>S-adenosyl-L-methionine</name>
        <dbReference type="ChEBI" id="CHEBI:59789"/>
    </ligand>
</feature>
<feature type="splice variant" id="VSP_044213" description="In isoform b." evidence="5">
    <location>
        <begin position="457"/>
        <end position="477"/>
    </location>
</feature>
<feature type="splice variant" id="VSP_044214" description="In isoform d." evidence="5">
    <original>YCKKVC</original>
    <variation>FWKKSF</variation>
    <location>
        <begin position="589"/>
        <end position="594"/>
    </location>
</feature>
<feature type="splice variant" id="VSP_044215" description="In isoform c." evidence="5">
    <original>V</original>
    <variation>M</variation>
    <location>
        <position position="593"/>
    </location>
</feature>
<feature type="splice variant" id="VSP_044216" description="In isoform d." evidence="5">
    <location>
        <begin position="595"/>
        <end position="918"/>
    </location>
</feature>
<feature type="splice variant" id="VSP_044217" description="In isoform c." evidence="5">
    <original>L</original>
    <variation>F</variation>
    <location>
        <position position="615"/>
    </location>
</feature>
<feature type="splice variant" id="VSP_044218" description="In isoform c." evidence="5">
    <location>
        <begin position="616"/>
        <end position="918"/>
    </location>
</feature>
<accession>Q9NAA5</accession>
<accession>H8ESH8</accession>
<accession>H8ESH9</accession>
<accession>H8ESI0</accession>
<accession>H8ESI1</accession>
<name>MTR1_CAEEL</name>
<comment type="function">
    <text evidence="1">S-adenosyl-L-methionine-dependent methyltransferase that mediates mRNA cap1 2'-O-ribose methylation to the 5'-cap structure of mRNAs. Methylates the ribose of the first nucleotide of a m(7)GpppG-capped mRNA to produce m(7)GpppNmp (cap1). Cap1 modification is linked to higher levels of translation.</text>
</comment>
<comment type="catalytic activity">
    <reaction>
        <text>a 5'-end (N(7)-methyl 5'-triphosphoguanosine)-ribonucleoside in mRNA + S-adenosyl-L-methionine = a 5'-end (N(7)-methyl 5'-triphosphoguanosine)-(2'-O-methyl-ribonucleoside) in mRNA + S-adenosyl-L-homocysteine + H(+)</text>
        <dbReference type="Rhea" id="RHEA:67020"/>
        <dbReference type="Rhea" id="RHEA-COMP:17167"/>
        <dbReference type="Rhea" id="RHEA-COMP:17168"/>
        <dbReference type="ChEBI" id="CHEBI:15378"/>
        <dbReference type="ChEBI" id="CHEBI:57856"/>
        <dbReference type="ChEBI" id="CHEBI:59789"/>
        <dbReference type="ChEBI" id="CHEBI:156461"/>
        <dbReference type="ChEBI" id="CHEBI:167609"/>
        <dbReference type="EC" id="2.1.1.57"/>
    </reaction>
</comment>
<comment type="alternative products">
    <event type="alternative splicing"/>
    <isoform>
        <id>Q9NAA5-1</id>
        <name>a</name>
        <sequence type="displayed"/>
    </isoform>
    <isoform>
        <id>Q9NAA5-2</id>
        <name>b</name>
        <sequence type="described" ref="VSP_044213"/>
    </isoform>
    <isoform>
        <id>Q9NAA5-3</id>
        <name>c</name>
        <sequence type="described" ref="VSP_044215 VSP_044217 VSP_044218"/>
    </isoform>
    <isoform>
        <id>Q9NAA5-4</id>
        <name>d</name>
        <sequence type="described" ref="VSP_044214 VSP_044216"/>
    </isoform>
</comment>
<reference key="1">
    <citation type="journal article" date="1998" name="Science">
        <title>Genome sequence of the nematode C. elegans: a platform for investigating biology.</title>
        <authorList>
            <consortium name="The C. elegans sequencing consortium"/>
        </authorList>
    </citation>
    <scope>NUCLEOTIDE SEQUENCE [LARGE SCALE GENOMIC DNA]</scope>
    <scope>ALTERNATIVE SPLICING</scope>
    <source>
        <strain>Bristol N2</strain>
    </source>
</reference>
<organism>
    <name type="scientific">Caenorhabditis elegans</name>
    <dbReference type="NCBI Taxonomy" id="6239"/>
    <lineage>
        <taxon>Eukaryota</taxon>
        <taxon>Metazoa</taxon>
        <taxon>Ecdysozoa</taxon>
        <taxon>Nematoda</taxon>
        <taxon>Chromadorea</taxon>
        <taxon>Rhabditida</taxon>
        <taxon>Rhabditina</taxon>
        <taxon>Rhabditomorpha</taxon>
        <taxon>Rhabditoidea</taxon>
        <taxon>Rhabditidae</taxon>
        <taxon>Peloderinae</taxon>
        <taxon>Caenorhabditis</taxon>
    </lineage>
</organism>
<dbReference type="EC" id="2.1.1.57"/>
<dbReference type="EMBL" id="AL132949">
    <property type="protein sequence ID" value="CCG28112.1"/>
    <property type="molecule type" value="Genomic_DNA"/>
</dbReference>
<dbReference type="EMBL" id="AL132949">
    <property type="protein sequence ID" value="CCG28113.1"/>
    <property type="molecule type" value="Genomic_DNA"/>
</dbReference>
<dbReference type="EMBL" id="AL132949">
    <property type="protein sequence ID" value="CCG28114.1"/>
    <property type="molecule type" value="Genomic_DNA"/>
</dbReference>
<dbReference type="EMBL" id="AL132949">
    <property type="protein sequence ID" value="CCG28115.1"/>
    <property type="molecule type" value="Genomic_DNA"/>
</dbReference>
<dbReference type="RefSeq" id="NP_001254457.1">
    <molecule id="Q9NAA5-1"/>
    <property type="nucleotide sequence ID" value="NM_001267528.1"/>
</dbReference>
<dbReference type="RefSeq" id="NP_001254458.1">
    <molecule id="Q9NAA5-2"/>
    <property type="nucleotide sequence ID" value="NM_001267529.1"/>
</dbReference>
<dbReference type="RefSeq" id="NP_001254459.1">
    <molecule id="Q9NAA5-3"/>
    <property type="nucleotide sequence ID" value="NM_001267530.1"/>
</dbReference>
<dbReference type="RefSeq" id="NP_001254460.1">
    <molecule id="Q9NAA5-4"/>
    <property type="nucleotide sequence ID" value="NM_001267531.1"/>
</dbReference>
<dbReference type="SMR" id="Q9NAA5"/>
<dbReference type="BioGRID" id="40433">
    <property type="interactions" value="3"/>
</dbReference>
<dbReference type="FunCoup" id="Q9NAA5">
    <property type="interactions" value="3210"/>
</dbReference>
<dbReference type="STRING" id="6239.Y53F4B.13a.1"/>
<dbReference type="PaxDb" id="6239-Y53F4B.13a"/>
<dbReference type="PeptideAtlas" id="Q9NAA5"/>
<dbReference type="EnsemblMetazoa" id="Y53F4B.13a.1">
    <molecule id="Q9NAA5-1"/>
    <property type="protein sequence ID" value="Y53F4B.13a.1"/>
    <property type="gene ID" value="WBGene00013160"/>
</dbReference>
<dbReference type="EnsemblMetazoa" id="Y53F4B.13b.1">
    <molecule id="Q9NAA5-2"/>
    <property type="protein sequence ID" value="Y53F4B.13b.1"/>
    <property type="gene ID" value="WBGene00013160"/>
</dbReference>
<dbReference type="EnsemblMetazoa" id="Y53F4B.13c.1">
    <molecule id="Q9NAA5-3"/>
    <property type="protein sequence ID" value="Y53F4B.13c.1"/>
    <property type="gene ID" value="WBGene00013160"/>
</dbReference>
<dbReference type="EnsemblMetazoa" id="Y53F4B.13d.1">
    <molecule id="Q9NAA5-4"/>
    <property type="protein sequence ID" value="Y53F4B.13d.1"/>
    <property type="gene ID" value="WBGene00013160"/>
</dbReference>
<dbReference type="KEGG" id="cel:CELE_Y53F4B.13"/>
<dbReference type="UCSC" id="Y53F4B.13">
    <molecule id="Q9NAA5-1"/>
    <property type="organism name" value="c. elegans"/>
</dbReference>
<dbReference type="AGR" id="WB:WBGene00013160"/>
<dbReference type="CTD" id="175156"/>
<dbReference type="WormBase" id="Y53F4B.13a">
    <molecule id="Q9NAA5-1"/>
    <property type="protein sequence ID" value="CE47372"/>
    <property type="gene ID" value="WBGene00013160"/>
    <property type="gene designation" value="cmtr-1"/>
</dbReference>
<dbReference type="WormBase" id="Y53F4B.13b">
    <molecule id="Q9NAA5-2"/>
    <property type="protein sequence ID" value="CE47245"/>
    <property type="gene ID" value="WBGene00013160"/>
    <property type="gene designation" value="cmtr-1"/>
</dbReference>
<dbReference type="WormBase" id="Y53F4B.13c">
    <molecule id="Q9NAA5-3"/>
    <property type="protein sequence ID" value="CE47183"/>
    <property type="gene ID" value="WBGene00013160"/>
    <property type="gene designation" value="cmtr-1"/>
</dbReference>
<dbReference type="WormBase" id="Y53F4B.13d">
    <molecule id="Q9NAA5-4"/>
    <property type="protein sequence ID" value="CE47272"/>
    <property type="gene ID" value="WBGene00013160"/>
    <property type="gene designation" value="cmtr-1"/>
</dbReference>
<dbReference type="eggNOG" id="KOG3673">
    <property type="taxonomic scope" value="Eukaryota"/>
</dbReference>
<dbReference type="GeneTree" id="ENSGT00940000157172"/>
<dbReference type="HOGENOM" id="CLU_011097_1_0_1"/>
<dbReference type="InParanoid" id="Q9NAA5"/>
<dbReference type="OMA" id="FFYCRGM"/>
<dbReference type="OrthoDB" id="10251234at2759"/>
<dbReference type="PhylomeDB" id="Q9NAA5"/>
<dbReference type="PRO" id="PR:Q9NAA5"/>
<dbReference type="Proteomes" id="UP000001940">
    <property type="component" value="Chromosome II"/>
</dbReference>
<dbReference type="Bgee" id="WBGene00013160">
    <property type="expression patterns" value="Expressed in embryo and 3 other cell types or tissues"/>
</dbReference>
<dbReference type="GO" id="GO:0005737">
    <property type="term" value="C:cytoplasm"/>
    <property type="evidence" value="ECO:0000318"/>
    <property type="project" value="GO_Central"/>
</dbReference>
<dbReference type="GO" id="GO:0005634">
    <property type="term" value="C:nucleus"/>
    <property type="evidence" value="ECO:0000250"/>
    <property type="project" value="UniProtKB"/>
</dbReference>
<dbReference type="GO" id="GO:0004483">
    <property type="term" value="F:mRNA (nucleoside-2'-O-)-methyltransferase activity"/>
    <property type="evidence" value="ECO:0000250"/>
    <property type="project" value="UniProtKB"/>
</dbReference>
<dbReference type="GO" id="GO:0003676">
    <property type="term" value="F:nucleic acid binding"/>
    <property type="evidence" value="ECO:0007669"/>
    <property type="project" value="InterPro"/>
</dbReference>
<dbReference type="GO" id="GO:0006370">
    <property type="term" value="P:7-methylguanosine mRNA capping"/>
    <property type="evidence" value="ECO:0000250"/>
    <property type="project" value="UniProtKB"/>
</dbReference>
<dbReference type="GO" id="GO:0032259">
    <property type="term" value="P:methylation"/>
    <property type="evidence" value="ECO:0007669"/>
    <property type="project" value="UniProtKB-KW"/>
</dbReference>
<dbReference type="GO" id="GO:0006397">
    <property type="term" value="P:mRNA processing"/>
    <property type="evidence" value="ECO:0000250"/>
    <property type="project" value="UniProtKB"/>
</dbReference>
<dbReference type="FunFam" id="3.40.50.12760:FF:000004">
    <property type="entry name" value="FtsJ-like methyltransferase"/>
    <property type="match status" value="1"/>
</dbReference>
<dbReference type="Gene3D" id="3.40.50.12760">
    <property type="match status" value="1"/>
</dbReference>
<dbReference type="InterPro" id="IPR000467">
    <property type="entry name" value="G_patch_dom"/>
</dbReference>
<dbReference type="InterPro" id="IPR050851">
    <property type="entry name" value="mRNA_Cap_2O-Ribose_MeTrfase"/>
</dbReference>
<dbReference type="InterPro" id="IPR002877">
    <property type="entry name" value="RNA_MeTrfase_FtsJ_dom"/>
</dbReference>
<dbReference type="InterPro" id="IPR025816">
    <property type="entry name" value="RrmJ-type_MeTrfase"/>
</dbReference>
<dbReference type="InterPro" id="IPR029063">
    <property type="entry name" value="SAM-dependent_MTases_sf"/>
</dbReference>
<dbReference type="PANTHER" id="PTHR16121:SF0">
    <property type="entry name" value="CAP-SPECIFIC MRNA (NUCLEOSIDE-2'-O-)-METHYLTRANSFERASE 1"/>
    <property type="match status" value="1"/>
</dbReference>
<dbReference type="PANTHER" id="PTHR16121">
    <property type="entry name" value="CAP-SPECIFIC MRNA (NUCLEOSIDE-2'-O-)-METHYLTRANSFERASE 1-RELATED"/>
    <property type="match status" value="1"/>
</dbReference>
<dbReference type="Pfam" id="PF01728">
    <property type="entry name" value="FtsJ"/>
    <property type="match status" value="1"/>
</dbReference>
<dbReference type="Pfam" id="PF01585">
    <property type="entry name" value="G-patch"/>
    <property type="match status" value="1"/>
</dbReference>
<dbReference type="SMART" id="SM00443">
    <property type="entry name" value="G_patch"/>
    <property type="match status" value="1"/>
</dbReference>
<dbReference type="SUPFAM" id="SSF53335">
    <property type="entry name" value="S-adenosyl-L-methionine-dependent methyltransferases"/>
    <property type="match status" value="1"/>
</dbReference>
<dbReference type="PROSITE" id="PS50174">
    <property type="entry name" value="G_PATCH"/>
    <property type="match status" value="1"/>
</dbReference>
<dbReference type="PROSITE" id="PS51613">
    <property type="entry name" value="SAM_MT_RRMJ"/>
    <property type="match status" value="1"/>
</dbReference>